<name>ATG29_YEAST</name>
<evidence type="ECO:0000256" key="1">
    <source>
        <dbReference type="SAM" id="MobiDB-lite"/>
    </source>
</evidence>
<evidence type="ECO:0000269" key="2">
    <source>
    </source>
</evidence>
<evidence type="ECO:0000269" key="3">
    <source>
    </source>
</evidence>
<evidence type="ECO:0000269" key="4">
    <source>
    </source>
</evidence>
<evidence type="ECO:0000269" key="5">
    <source>
    </source>
</evidence>
<evidence type="ECO:0000269" key="6">
    <source>
    </source>
</evidence>
<evidence type="ECO:0000269" key="7">
    <source>
    </source>
</evidence>
<evidence type="ECO:0000269" key="8">
    <source>
    </source>
</evidence>
<evidence type="ECO:0000269" key="9">
    <source>
    </source>
</evidence>
<evidence type="ECO:0000305" key="10"/>
<evidence type="ECO:0007744" key="11">
    <source>
    </source>
</evidence>
<evidence type="ECO:0007744" key="12">
    <source>
    </source>
</evidence>
<reference key="1">
    <citation type="journal article" date="1996" name="Yeast">
        <title>The sequence of 55 kb on the left arm of yeast chromosome XVI identifies a small nuclear RNA, a new putative protein kinase and two new putative regulators.</title>
        <authorList>
            <person name="Purnelle B."/>
            <person name="Coster F."/>
            <person name="Goffeau A."/>
        </authorList>
    </citation>
    <scope>NUCLEOTIDE SEQUENCE [GENOMIC DNA]</scope>
    <source>
        <strain>ATCC 204511 / S288c / AB972</strain>
    </source>
</reference>
<reference key="2">
    <citation type="journal article" date="1997" name="Nature">
        <title>The nucleotide sequence of Saccharomyces cerevisiae chromosome XVI.</title>
        <authorList>
            <person name="Bussey H."/>
            <person name="Storms R.K."/>
            <person name="Ahmed A."/>
            <person name="Albermann K."/>
            <person name="Allen E."/>
            <person name="Ansorge W."/>
            <person name="Araujo R."/>
            <person name="Aparicio A."/>
            <person name="Barrell B.G."/>
            <person name="Badcock K."/>
            <person name="Benes V."/>
            <person name="Botstein D."/>
            <person name="Bowman S."/>
            <person name="Brueckner M."/>
            <person name="Carpenter J."/>
            <person name="Cherry J.M."/>
            <person name="Chung E."/>
            <person name="Churcher C.M."/>
            <person name="Coster F."/>
            <person name="Davis K."/>
            <person name="Davis R.W."/>
            <person name="Dietrich F.S."/>
            <person name="Delius H."/>
            <person name="DiPaolo T."/>
            <person name="Dubois E."/>
            <person name="Duesterhoeft A."/>
            <person name="Duncan M."/>
            <person name="Floeth M."/>
            <person name="Fortin N."/>
            <person name="Friesen J.D."/>
            <person name="Fritz C."/>
            <person name="Goffeau A."/>
            <person name="Hall J."/>
            <person name="Hebling U."/>
            <person name="Heumann K."/>
            <person name="Hilbert H."/>
            <person name="Hillier L.W."/>
            <person name="Hunicke-Smith S."/>
            <person name="Hyman R.W."/>
            <person name="Johnston M."/>
            <person name="Kalman S."/>
            <person name="Kleine K."/>
            <person name="Komp C."/>
            <person name="Kurdi O."/>
            <person name="Lashkari D."/>
            <person name="Lew H."/>
            <person name="Lin A."/>
            <person name="Lin D."/>
            <person name="Louis E.J."/>
            <person name="Marathe R."/>
            <person name="Messenguy F."/>
            <person name="Mewes H.-W."/>
            <person name="Mirtipati S."/>
            <person name="Moestl D."/>
            <person name="Mueller-Auer S."/>
            <person name="Namath A."/>
            <person name="Nentwich U."/>
            <person name="Oefner P."/>
            <person name="Pearson D."/>
            <person name="Petel F.X."/>
            <person name="Pohl T.M."/>
            <person name="Purnelle B."/>
            <person name="Rajandream M.A."/>
            <person name="Rechmann S."/>
            <person name="Rieger M."/>
            <person name="Riles L."/>
            <person name="Roberts D."/>
            <person name="Schaefer M."/>
            <person name="Scharfe M."/>
            <person name="Scherens B."/>
            <person name="Schramm S."/>
            <person name="Schroeder M."/>
            <person name="Sdicu A.-M."/>
            <person name="Tettelin H."/>
            <person name="Urrestarazu L.A."/>
            <person name="Ushinsky S."/>
            <person name="Vierendeels F."/>
            <person name="Vissers S."/>
            <person name="Voss H."/>
            <person name="Walsh S.V."/>
            <person name="Wambutt R."/>
            <person name="Wang Y."/>
            <person name="Wedler E."/>
            <person name="Wedler H."/>
            <person name="Winnett E."/>
            <person name="Zhong W.-W."/>
            <person name="Zollner A."/>
            <person name="Vo D.H."/>
            <person name="Hani J."/>
        </authorList>
    </citation>
    <scope>NUCLEOTIDE SEQUENCE [LARGE SCALE GENOMIC DNA]</scope>
    <source>
        <strain>ATCC 204508 / S288c</strain>
    </source>
</reference>
<reference key="3">
    <citation type="journal article" date="2014" name="G3 (Bethesda)">
        <title>The reference genome sequence of Saccharomyces cerevisiae: Then and now.</title>
        <authorList>
            <person name="Engel S.R."/>
            <person name="Dietrich F.S."/>
            <person name="Fisk D.G."/>
            <person name="Binkley G."/>
            <person name="Balakrishnan R."/>
            <person name="Costanzo M.C."/>
            <person name="Dwight S.S."/>
            <person name="Hitz B.C."/>
            <person name="Karra K."/>
            <person name="Nash R.S."/>
            <person name="Weng S."/>
            <person name="Wong E.D."/>
            <person name="Lloyd P."/>
            <person name="Skrzypek M.S."/>
            <person name="Miyasato S.R."/>
            <person name="Simison M."/>
            <person name="Cherry J.M."/>
        </authorList>
    </citation>
    <scope>GENOME REANNOTATION</scope>
    <source>
        <strain>ATCC 204508 / S288c</strain>
    </source>
</reference>
<reference key="4">
    <citation type="journal article" date="2003" name="Nature">
        <title>Global analysis of protein localization in budding yeast.</title>
        <authorList>
            <person name="Huh W.-K."/>
            <person name="Falvo J.V."/>
            <person name="Gerke L.C."/>
            <person name="Carroll A.S."/>
            <person name="Howson R.W."/>
            <person name="Weissman J.S."/>
            <person name="O'Shea E.K."/>
        </authorList>
    </citation>
    <scope>SUBCELLULAR LOCATION [LARGE SCALE ANALYSIS]</scope>
</reference>
<reference key="5">
    <citation type="journal article" date="2003" name="Nature">
        <title>Global analysis of protein expression in yeast.</title>
        <authorList>
            <person name="Ghaemmaghami S."/>
            <person name="Huh W.-K."/>
            <person name="Bower K."/>
            <person name="Howson R.W."/>
            <person name="Belle A."/>
            <person name="Dephoure N."/>
            <person name="O'Shea E.K."/>
            <person name="Weissman J.S."/>
        </authorList>
    </citation>
    <scope>LEVEL OF PROTEIN EXPRESSION [LARGE SCALE ANALYSIS]</scope>
</reference>
<reference key="6">
    <citation type="journal article" date="2005" name="Biochem. Biophys. Res. Commun.">
        <title>Characterization of a novel autophagy-specific gene, ATG29.</title>
        <authorList>
            <person name="Kawamata T."/>
            <person name="Kamada Y."/>
            <person name="Suzuki K."/>
            <person name="Kuboshima N."/>
            <person name="Akimatsu H."/>
            <person name="Ota S."/>
            <person name="Ohsumi M."/>
            <person name="Ohsumi Y."/>
        </authorList>
    </citation>
    <scope>FUNCTION</scope>
    <scope>SUBCELLULAR LOCATION</scope>
</reference>
<reference key="7">
    <citation type="journal article" date="2007" name="Autophagy">
        <title>Overexpression of autophagy-related genes inhibits yeast filamentous growth.</title>
        <authorList>
            <person name="Ma J."/>
            <person name="Jin R."/>
            <person name="Dobry C.J."/>
            <person name="Lawson S.K."/>
            <person name="Kumar A."/>
        </authorList>
    </citation>
    <scope>FUNCTION</scope>
</reference>
<reference key="8">
    <citation type="journal article" date="2008" name="Mol. Biol. Cell">
        <title>Organization of the pre-autophagosomal structure responsible for autophagosome formation.</title>
        <authorList>
            <person name="Kawamata T."/>
            <person name="Kamada Y."/>
            <person name="Kabeya Y."/>
            <person name="Sekito T."/>
            <person name="Ohsumi Y."/>
        </authorList>
    </citation>
    <scope>FUNCTION</scope>
    <scope>SUBCELLULAR LOCATION</scope>
    <scope>INTERACTION WITH ATG1 AND ATG17</scope>
</reference>
<reference key="9">
    <citation type="journal article" date="2008" name="Mol. Cell. Proteomics">
        <title>A multidimensional chromatography technology for in-depth phosphoproteome analysis.</title>
        <authorList>
            <person name="Albuquerque C.P."/>
            <person name="Smolka M.B."/>
            <person name="Payne S.H."/>
            <person name="Bafna V."/>
            <person name="Eng J."/>
            <person name="Zhou H."/>
        </authorList>
    </citation>
    <scope>PHOSPHORYLATION [LARGE SCALE ANALYSIS] AT SER-106</scope>
    <scope>IDENTIFICATION BY MASS SPECTROMETRY [LARGE SCALE ANALYSIS]</scope>
</reference>
<reference key="10">
    <citation type="journal article" date="2009" name="Autophagy">
        <title>A multiple ATG gene knockout strain for yeast two-hybrid analysis.</title>
        <authorList>
            <person name="Cao Y."/>
            <person name="Nair U."/>
            <person name="Yasumura-Yorimitsu K."/>
            <person name="Klionsky D.J."/>
        </authorList>
    </citation>
    <scope>INTERACTION WITH ATG17 AND ATG31</scope>
</reference>
<reference key="11">
    <citation type="journal article" date="2009" name="Biochem. Biophys. Res. Commun.">
        <title>Characterization of the Atg17-Atg29-Atg31 complex specifically required for starvation-induced autophagy in Saccharomyces cerevisiae.</title>
        <authorList>
            <person name="Kabeya Y."/>
            <person name="Noda N.N."/>
            <person name="Fujioka Y."/>
            <person name="Suzuki K."/>
            <person name="Inagaki F."/>
            <person name="Ohsumi Y."/>
        </authorList>
    </citation>
    <scope>IDENTIFICATION IN THE ATG17-ATG29-ATG31 COMPLEX</scope>
    <scope>INTERACTION WITH THE ATG1-ATG13 COMPLEX</scope>
</reference>
<reference key="12">
    <citation type="journal article" date="2009" name="Mol. Biol. Cell">
        <title>A genomic screen for yeast mutants defective in selective mitochondria autophagy.</title>
        <authorList>
            <person name="Kanki T."/>
            <person name="Wang K."/>
            <person name="Baba M."/>
            <person name="Bartholomew C.R."/>
            <person name="Lynch-Day M.A."/>
            <person name="Du Z."/>
            <person name="Geng J."/>
            <person name="Mao K."/>
            <person name="Yang Z."/>
            <person name="Yen W.L."/>
            <person name="Klionsky D.J."/>
        </authorList>
    </citation>
    <scope>FUNCTION</scope>
</reference>
<reference key="13">
    <citation type="journal article" date="2009" name="Science">
        <title>Global analysis of Cdk1 substrate phosphorylation sites provides insights into evolution.</title>
        <authorList>
            <person name="Holt L.J."/>
            <person name="Tuch B.B."/>
            <person name="Villen J."/>
            <person name="Johnson A.D."/>
            <person name="Gygi S.P."/>
            <person name="Morgan D.O."/>
        </authorList>
    </citation>
    <scope>PHOSPHORYLATION [LARGE SCALE ANALYSIS] AT SER-187 AND SER-188</scope>
    <scope>IDENTIFICATION BY MASS SPECTROMETRY [LARGE SCALE ANALYSIS]</scope>
</reference>
<organism>
    <name type="scientific">Saccharomyces cerevisiae (strain ATCC 204508 / S288c)</name>
    <name type="common">Baker's yeast</name>
    <dbReference type="NCBI Taxonomy" id="559292"/>
    <lineage>
        <taxon>Eukaryota</taxon>
        <taxon>Fungi</taxon>
        <taxon>Dikarya</taxon>
        <taxon>Ascomycota</taxon>
        <taxon>Saccharomycotina</taxon>
        <taxon>Saccharomycetes</taxon>
        <taxon>Saccharomycetales</taxon>
        <taxon>Saccharomycetaceae</taxon>
        <taxon>Saccharomyces</taxon>
    </lineage>
</organism>
<accession>Q12092</accession>
<accession>D6W3K2</accession>
<proteinExistence type="evidence at protein level"/>
<dbReference type="EMBL" id="X96770">
    <property type="protein sequence ID" value="CAA65555.1"/>
    <property type="molecule type" value="Genomic_DNA"/>
</dbReference>
<dbReference type="EMBL" id="Z73522">
    <property type="protein sequence ID" value="CAA97871.1"/>
    <property type="molecule type" value="Genomic_DNA"/>
</dbReference>
<dbReference type="EMBL" id="BK006949">
    <property type="protein sequence ID" value="DAA11268.1"/>
    <property type="molecule type" value="Genomic_DNA"/>
</dbReference>
<dbReference type="PIR" id="S65177">
    <property type="entry name" value="S65177"/>
</dbReference>
<dbReference type="RefSeq" id="NP_015159.1">
    <property type="nucleotide sequence ID" value="NM_001183980.1"/>
</dbReference>
<dbReference type="SMR" id="Q12092"/>
<dbReference type="BioGRID" id="36017">
    <property type="interactions" value="84"/>
</dbReference>
<dbReference type="ComplexPortal" id="CPX-1676">
    <property type="entry name" value="ATG1/ULK1 protein kinase complex"/>
</dbReference>
<dbReference type="ComplexPortal" id="CPX-397">
    <property type="entry name" value="Atg17-Atg31-Atg29 complex"/>
</dbReference>
<dbReference type="DIP" id="DIP-6360N"/>
<dbReference type="FunCoup" id="Q12092">
    <property type="interactions" value="96"/>
</dbReference>
<dbReference type="IntAct" id="Q12092">
    <property type="interactions" value="7"/>
</dbReference>
<dbReference type="MINT" id="Q12092"/>
<dbReference type="STRING" id="4932.YPL166W"/>
<dbReference type="iPTMnet" id="Q12092"/>
<dbReference type="PaxDb" id="4932-YPL166W"/>
<dbReference type="PeptideAtlas" id="Q12092"/>
<dbReference type="EnsemblFungi" id="YPL166W_mRNA">
    <property type="protein sequence ID" value="YPL166W"/>
    <property type="gene ID" value="YPL166W"/>
</dbReference>
<dbReference type="GeneID" id="855937"/>
<dbReference type="KEGG" id="sce:YPL166W"/>
<dbReference type="AGR" id="SGD:S000006087"/>
<dbReference type="SGD" id="S000006087">
    <property type="gene designation" value="ATG29"/>
</dbReference>
<dbReference type="VEuPathDB" id="FungiDB:YPL166W"/>
<dbReference type="eggNOG" id="ENOG502S1W0">
    <property type="taxonomic scope" value="Eukaryota"/>
</dbReference>
<dbReference type="HOGENOM" id="CLU_121102_0_0_1"/>
<dbReference type="InParanoid" id="Q12092"/>
<dbReference type="OMA" id="RKSEINW"/>
<dbReference type="OrthoDB" id="21072at2759"/>
<dbReference type="BioCyc" id="YEAST:G3O-34062-MONOMER"/>
<dbReference type="CD-CODE" id="4F15E4D1">
    <property type="entry name" value="ATG condensate"/>
</dbReference>
<dbReference type="PRO" id="PR:Q12092"/>
<dbReference type="Proteomes" id="UP000002311">
    <property type="component" value="Chromosome XVI"/>
</dbReference>
<dbReference type="RNAct" id="Q12092">
    <property type="molecule type" value="protein"/>
</dbReference>
<dbReference type="GO" id="GO:1990316">
    <property type="term" value="C:Atg1/ULK1 kinase complex"/>
    <property type="evidence" value="ECO:0000314"/>
    <property type="project" value="SGD"/>
</dbReference>
<dbReference type="GO" id="GO:0005737">
    <property type="term" value="C:cytoplasm"/>
    <property type="evidence" value="ECO:0000314"/>
    <property type="project" value="ComplexPortal"/>
</dbReference>
<dbReference type="GO" id="GO:0005829">
    <property type="term" value="C:cytosol"/>
    <property type="evidence" value="ECO:0007005"/>
    <property type="project" value="SGD"/>
</dbReference>
<dbReference type="GO" id="GO:0005634">
    <property type="term" value="C:nucleus"/>
    <property type="evidence" value="ECO:0007005"/>
    <property type="project" value="SGD"/>
</dbReference>
<dbReference type="GO" id="GO:0000407">
    <property type="term" value="C:phagophore assembly site"/>
    <property type="evidence" value="ECO:0000314"/>
    <property type="project" value="SGD"/>
</dbReference>
<dbReference type="GO" id="GO:0032991">
    <property type="term" value="C:protein-containing complex"/>
    <property type="evidence" value="ECO:0000353"/>
    <property type="project" value="ComplexPortal"/>
</dbReference>
<dbReference type="GO" id="GO:0000149">
    <property type="term" value="F:SNARE binding"/>
    <property type="evidence" value="ECO:0000314"/>
    <property type="project" value="SGD"/>
</dbReference>
<dbReference type="GO" id="GO:0000045">
    <property type="term" value="P:autophagosome assembly"/>
    <property type="evidence" value="ECO:0000314"/>
    <property type="project" value="SGD"/>
</dbReference>
<dbReference type="GO" id="GO:0006914">
    <property type="term" value="P:autophagy"/>
    <property type="evidence" value="ECO:0000314"/>
    <property type="project" value="ComplexPortal"/>
</dbReference>
<dbReference type="GO" id="GO:0000422">
    <property type="term" value="P:autophagy of mitochondrion"/>
    <property type="evidence" value="ECO:0000315"/>
    <property type="project" value="SGD"/>
</dbReference>
<dbReference type="GO" id="GO:0006995">
    <property type="term" value="P:cellular response to nitrogen starvation"/>
    <property type="evidence" value="ECO:0000314"/>
    <property type="project" value="SGD"/>
</dbReference>
<dbReference type="GO" id="GO:0016236">
    <property type="term" value="P:macroautophagy"/>
    <property type="evidence" value="ECO:0000315"/>
    <property type="project" value="SGD"/>
</dbReference>
<dbReference type="GO" id="GO:0044804">
    <property type="term" value="P:nucleophagy"/>
    <property type="evidence" value="ECO:0000315"/>
    <property type="project" value="SGD"/>
</dbReference>
<dbReference type="GO" id="GO:0034727">
    <property type="term" value="P:piecemeal microautophagy of the nucleus"/>
    <property type="evidence" value="ECO:0000315"/>
    <property type="project" value="SGD"/>
</dbReference>
<dbReference type="GO" id="GO:0034497">
    <property type="term" value="P:protein localization to phagophore assembly site"/>
    <property type="evidence" value="ECO:0000314"/>
    <property type="project" value="SGD"/>
</dbReference>
<dbReference type="GO" id="GO:0015031">
    <property type="term" value="P:protein transport"/>
    <property type="evidence" value="ECO:0007669"/>
    <property type="project" value="UniProtKB-KW"/>
</dbReference>
<dbReference type="GO" id="GO:0042594">
    <property type="term" value="P:response to starvation"/>
    <property type="evidence" value="ECO:0000303"/>
    <property type="project" value="ComplexPortal"/>
</dbReference>
<dbReference type="FunFam" id="1.10.10.2570:FF:000001">
    <property type="entry name" value="Autophagy-related protein 29"/>
    <property type="match status" value="1"/>
</dbReference>
<dbReference type="Gene3D" id="1.10.10.2570">
    <property type="match status" value="1"/>
</dbReference>
<dbReference type="InterPro" id="IPR039113">
    <property type="entry name" value="ATG29"/>
</dbReference>
<dbReference type="InterPro" id="IPR040666">
    <property type="entry name" value="Atg29_N"/>
</dbReference>
<dbReference type="InterPro" id="IPR039362">
    <property type="entry name" value="ATG29_sf"/>
</dbReference>
<dbReference type="PANTHER" id="PTHR40012">
    <property type="entry name" value="AUTOPHAGY-RELATED PROTEIN 29"/>
    <property type="match status" value="1"/>
</dbReference>
<dbReference type="PANTHER" id="PTHR40012:SF1">
    <property type="entry name" value="AUTOPHAGY-RELATED PROTEIN 29"/>
    <property type="match status" value="1"/>
</dbReference>
<dbReference type="Pfam" id="PF18388">
    <property type="entry name" value="ATG29_N"/>
    <property type="match status" value="1"/>
</dbReference>
<comment type="function">
    <text evidence="4 5 6 9">Plays a role in autophagy. Functions at the preautophagosomal structure (PAS) in order to form normal autophagosomes under starvation conditions. Also plays a role in mitophagy and regulation of filamentous growth.</text>
</comment>
<comment type="subunit">
    <text evidence="6 7 8">Forms a stable complex with ATG17 and ATG31. Interacts directly with ATG31. The ATG17-ATG29-ATG31 complex interacts with the ATG1-ATG13 complex. Note=The interaction with the ATG1-ATG13 complex is induced by starvation.</text>
</comment>
<comment type="subcellular location">
    <subcellularLocation>
        <location evidence="2 4 6">Preautophagosomal structure</location>
    </subcellularLocation>
    <text>Also localizes to other perivacuolar punctate structures.</text>
</comment>
<comment type="miscellaneous">
    <text evidence="3">Present with 752 molecules/cell in log phase SD medium.</text>
</comment>
<comment type="similarity">
    <text evidence="10">Belongs to the ATG29 family.</text>
</comment>
<gene>
    <name type="primary">ATG29</name>
    <name type="ordered locus">YPL166W</name>
    <name type="ORF">P2540</name>
</gene>
<protein>
    <recommendedName>
        <fullName>Autophagy-related protein 29</fullName>
    </recommendedName>
</protein>
<sequence length="213" mass="24708">MIMNSTNTVVYIKVKGRRPQGFLDPPKFEWNGTKERQLWTMVSNLNYSQDQIDWQNLSKIFETPEFFLKKRTYKLFAEHLELLQLQLEKKRDLEKYSNDQVNEGMSDLIHKYTPTLQNDNLLNVSASPLTTERQDSEEVETEVTNEALQHLQTSKILNIHKKTSDSENKPNDKLDKDGINKEMECGSSDDDLSSSLSVSKSALEEALMDRLQF</sequence>
<feature type="chain" id="PRO_0000232994" description="Autophagy-related protein 29">
    <location>
        <begin position="1"/>
        <end position="213"/>
    </location>
</feature>
<feature type="region of interest" description="Disordered" evidence="1">
    <location>
        <begin position="157"/>
        <end position="196"/>
    </location>
</feature>
<feature type="compositionally biased region" description="Basic and acidic residues" evidence="1">
    <location>
        <begin position="162"/>
        <end position="184"/>
    </location>
</feature>
<feature type="modified residue" description="Phosphoserine" evidence="11">
    <location>
        <position position="106"/>
    </location>
</feature>
<feature type="modified residue" description="Phosphoserine" evidence="12">
    <location>
        <position position="187"/>
    </location>
</feature>
<feature type="modified residue" description="Phosphoserine" evidence="12">
    <location>
        <position position="188"/>
    </location>
</feature>
<keyword id="KW-0072">Autophagy</keyword>
<keyword id="KW-0597">Phosphoprotein</keyword>
<keyword id="KW-0653">Protein transport</keyword>
<keyword id="KW-1185">Reference proteome</keyword>
<keyword id="KW-0813">Transport</keyword>